<protein>
    <recommendedName>
        <fullName>Uncharacterized protein L586</fullName>
    </recommendedName>
</protein>
<proteinExistence type="predicted"/>
<name>YL586_MIMIV</name>
<accession>Q5UP52</accession>
<evidence type="ECO:0000256" key="1">
    <source>
        <dbReference type="SAM" id="MobiDB-lite"/>
    </source>
</evidence>
<keyword id="KW-1185">Reference proteome</keyword>
<organism>
    <name type="scientific">Acanthamoeba polyphaga mimivirus</name>
    <name type="common">APMV</name>
    <dbReference type="NCBI Taxonomy" id="212035"/>
    <lineage>
        <taxon>Viruses</taxon>
        <taxon>Varidnaviria</taxon>
        <taxon>Bamfordvirae</taxon>
        <taxon>Nucleocytoviricota</taxon>
        <taxon>Megaviricetes</taxon>
        <taxon>Imitervirales</taxon>
        <taxon>Mimiviridae</taxon>
        <taxon>Megamimivirinae</taxon>
        <taxon>Mimivirus</taxon>
        <taxon>Mimivirus bradfordmassiliense</taxon>
    </lineage>
</organism>
<sequence length="103" mass="11670">MSNSCSTSSYPIRRKTPTRSGSNVNRNYVPSTYRPSICQCNQSNQSNQYNRSCHQTLPWYNKSNKPSFLDYKVNGSHSARKTCPSIPAKYHSPYTQCSGKCCC</sequence>
<dbReference type="EMBL" id="AY653733">
    <property type="protein sequence ID" value="AAV50849.1"/>
    <property type="molecule type" value="Genomic_DNA"/>
</dbReference>
<dbReference type="KEGG" id="vg:9925222"/>
<dbReference type="Proteomes" id="UP000001134">
    <property type="component" value="Genome"/>
</dbReference>
<feature type="chain" id="PRO_0000071294" description="Uncharacterized protein L586">
    <location>
        <begin position="1"/>
        <end position="103"/>
    </location>
</feature>
<feature type="region of interest" description="Disordered" evidence="1">
    <location>
        <begin position="1"/>
        <end position="28"/>
    </location>
</feature>
<feature type="compositionally biased region" description="Polar residues" evidence="1">
    <location>
        <begin position="1"/>
        <end position="10"/>
    </location>
</feature>
<feature type="compositionally biased region" description="Polar residues" evidence="1">
    <location>
        <begin position="18"/>
        <end position="28"/>
    </location>
</feature>
<organismHost>
    <name type="scientific">Acanthamoeba polyphaga</name>
    <name type="common">Amoeba</name>
    <dbReference type="NCBI Taxonomy" id="5757"/>
</organismHost>
<reference key="1">
    <citation type="journal article" date="2004" name="Science">
        <title>The 1.2-megabase genome sequence of Mimivirus.</title>
        <authorList>
            <person name="Raoult D."/>
            <person name="Audic S."/>
            <person name="Robert C."/>
            <person name="Abergel C."/>
            <person name="Renesto P."/>
            <person name="Ogata H."/>
            <person name="La Scola B."/>
            <person name="Susan M."/>
            <person name="Claverie J.-M."/>
        </authorList>
    </citation>
    <scope>NUCLEOTIDE SEQUENCE [LARGE SCALE GENOMIC DNA]</scope>
    <source>
        <strain>Rowbotham-Bradford</strain>
    </source>
</reference>
<gene>
    <name type="ordered locus">MIMI_L586</name>
</gene>